<reference key="1">
    <citation type="journal article" date="2000" name="Biochem. Pharmacol.">
        <title>Determination of the DNA sequences of acetylcholinesterase and butyrylcholinesterase from cat and demonstration of the existence of both in cat plasma.</title>
        <authorList>
            <person name="Bartels C.F."/>
            <person name="Xie W."/>
            <person name="Miller-Lindholm A.K."/>
            <person name="Schopfer L.M."/>
            <person name="Lockridge O."/>
        </authorList>
    </citation>
    <scope>NUCLEOTIDE SEQUENCE [MRNA]</scope>
    <source>
        <tissue>Pituitary</tissue>
    </source>
</reference>
<proteinExistence type="evidence at transcript level"/>
<sequence>MQSKGTIISIQFLLRFLLLWVLIGKSHTEEDIIITTKNGKVRGMNLPVLDGTVTAFLGIPYAQPPLGRLRFKKPQFLTKWSDIWNATKYANSCYQNADQSFPGFPGSEMWNPNTDLSEDCLYLNVWIPTPKPKNATVMIWIYGGGFQTGTSSLPVYDGKFLARVERVIVVSMNYRVGALGFLALPGNPEVPGNMGLFDQQLALQWVQKNIAAFGGNPKSVTLFGESAGAGSVSLHLLSPRSQPLFTRAILQSGSSNAPWAVMSLDEAKNRTLTLAKFIGCSKENDTEIIKCLRNKDPQEILLNELLVVPSDTLLSVNFGPVVDGDFLTDMPDTLLQLGQFKKTQILVGVNKDEGTAFLVYGAPGFSKDNDSIITRKEFQEGLKIYFPGVSEFGREAILFYYVDLLDDQRAEKYREALDDVLGDYNIICPALEFTTKFSELGNNAFFYYFEHRSSQLPWPEWMGVMHGYEIEFVFGLPLERRVNYTRAEEILSRSIMNYWANFAKYGNPNGTQNNSTRWPAFRSTDQKYLTLNAESPKVYTKLRAQQCRFWTLFFPKVLEMTGNIDEAEREWRAGFYRWNNYMMDWKNQFNDYTSKKESCAGL</sequence>
<evidence type="ECO:0000250" key="1"/>
<evidence type="ECO:0000250" key="2">
    <source>
        <dbReference type="UniProtKB" id="P06276"/>
    </source>
</evidence>
<evidence type="ECO:0000255" key="3"/>
<evidence type="ECO:0000255" key="4">
    <source>
        <dbReference type="PROSITE-ProRule" id="PRU10039"/>
    </source>
</evidence>
<evidence type="ECO:0000305" key="5"/>
<name>CHLE_FELCA</name>
<feature type="signal peptide" evidence="3">
    <location>
        <begin position="1"/>
        <end position="28"/>
    </location>
</feature>
<feature type="chain" id="PRO_0000008612" description="Cholinesterase">
    <location>
        <begin position="29"/>
        <end position="602"/>
    </location>
</feature>
<feature type="active site" description="Acyl-ester intermediate" evidence="4">
    <location>
        <position position="226"/>
    </location>
</feature>
<feature type="active site" description="Charge relay system" evidence="1">
    <location>
        <position position="353"/>
    </location>
</feature>
<feature type="active site" description="Charge relay system" evidence="1">
    <location>
        <position position="466"/>
    </location>
</feature>
<feature type="binding site" evidence="1">
    <location>
        <begin position="144"/>
        <end position="145"/>
    </location>
    <ligand>
        <name>substrate</name>
    </ligand>
</feature>
<feature type="modified residue" description="Phosphoserine" evidence="2">
    <location>
        <position position="226"/>
    </location>
</feature>
<feature type="glycosylation site" description="N-linked (GlcNAc...) asparagine" evidence="3">
    <location>
        <position position="85"/>
    </location>
</feature>
<feature type="glycosylation site" description="N-linked (GlcNAc...) asparagine" evidence="3">
    <location>
        <position position="134"/>
    </location>
</feature>
<feature type="glycosylation site" description="N-linked (GlcNAc...) asparagine" evidence="3">
    <location>
        <position position="269"/>
    </location>
</feature>
<feature type="glycosylation site" description="N-linked (GlcNAc...) asparagine" evidence="3">
    <location>
        <position position="284"/>
    </location>
</feature>
<feature type="glycosylation site" description="N-linked (GlcNAc...) asparagine" evidence="3">
    <location>
        <position position="369"/>
    </location>
</feature>
<feature type="glycosylation site" description="N-linked (GlcNAc...) asparagine" evidence="3">
    <location>
        <position position="483"/>
    </location>
</feature>
<feature type="glycosylation site" description="N-linked (GlcNAc...) asparagine" evidence="3">
    <location>
        <position position="509"/>
    </location>
</feature>
<feature type="glycosylation site" description="N-linked (GlcNAc...) asparagine" evidence="3">
    <location>
        <position position="513"/>
    </location>
</feature>
<feature type="glycosylation site" description="N-linked (GlcNAc...) asparagine" evidence="3">
    <location>
        <position position="514"/>
    </location>
</feature>
<feature type="disulfide bond" evidence="1">
    <location>
        <begin position="93"/>
        <end position="120"/>
    </location>
</feature>
<feature type="disulfide bond" evidence="1">
    <location>
        <begin position="280"/>
        <end position="291"/>
    </location>
</feature>
<feature type="disulfide bond" evidence="1">
    <location>
        <begin position="428"/>
        <end position="547"/>
    </location>
</feature>
<feature type="disulfide bond" description="Interchain" evidence="1">
    <location>
        <position position="599"/>
    </location>
</feature>
<protein>
    <recommendedName>
        <fullName>Cholinesterase</fullName>
        <ecNumber>3.1.1.8</ecNumber>
    </recommendedName>
    <alternativeName>
        <fullName>Acylcholine acylhydrolase</fullName>
    </alternativeName>
    <alternativeName>
        <fullName>Butyrylcholine esterase</fullName>
    </alternativeName>
    <alternativeName>
        <fullName>Choline esterase II</fullName>
    </alternativeName>
    <alternativeName>
        <fullName>Pseudocholinesterase</fullName>
    </alternativeName>
</protein>
<comment type="function">
    <text evidence="1">Esterase with broad substrate specificity. Contributes to the inactivation of the neurotransmitter acetylcholine. Can degrade neurotoxic organophosphate esters (By similarity).</text>
</comment>
<comment type="catalytic activity">
    <reaction>
        <text>an acylcholine + H2O = a carboxylate + choline + H(+)</text>
        <dbReference type="Rhea" id="RHEA:21964"/>
        <dbReference type="ChEBI" id="CHEBI:15354"/>
        <dbReference type="ChEBI" id="CHEBI:15377"/>
        <dbReference type="ChEBI" id="CHEBI:15378"/>
        <dbReference type="ChEBI" id="CHEBI:29067"/>
        <dbReference type="ChEBI" id="CHEBI:35287"/>
        <dbReference type="EC" id="3.1.1.8"/>
    </reaction>
</comment>
<comment type="subunit">
    <text evidence="1">Homotetramer; disulfide-linked. Dimer of dimers (By similarity).</text>
</comment>
<comment type="subcellular location">
    <subcellularLocation>
        <location evidence="1">Secreted</location>
    </subcellularLocation>
</comment>
<comment type="similarity">
    <text evidence="5">Belongs to the type-B carboxylesterase/lipase family.</text>
</comment>
<organism>
    <name type="scientific">Felis catus</name>
    <name type="common">Cat</name>
    <name type="synonym">Felis silvestris catus</name>
    <dbReference type="NCBI Taxonomy" id="9685"/>
    <lineage>
        <taxon>Eukaryota</taxon>
        <taxon>Metazoa</taxon>
        <taxon>Chordata</taxon>
        <taxon>Craniata</taxon>
        <taxon>Vertebrata</taxon>
        <taxon>Euteleostomi</taxon>
        <taxon>Mammalia</taxon>
        <taxon>Eutheria</taxon>
        <taxon>Laurasiatheria</taxon>
        <taxon>Carnivora</taxon>
        <taxon>Feliformia</taxon>
        <taxon>Felidae</taxon>
        <taxon>Felinae</taxon>
        <taxon>Felis</taxon>
    </lineage>
</organism>
<accession>O62760</accession>
<dbReference type="EC" id="3.1.1.8"/>
<dbReference type="EMBL" id="AF053483">
    <property type="protein sequence ID" value="AAC06261.1"/>
    <property type="molecule type" value="mRNA"/>
</dbReference>
<dbReference type="RefSeq" id="NP_001009364.1">
    <property type="nucleotide sequence ID" value="NM_001009364.1"/>
</dbReference>
<dbReference type="RefSeq" id="XP_044892257.1">
    <property type="nucleotide sequence ID" value="XM_045036322.1"/>
</dbReference>
<dbReference type="SMR" id="O62760"/>
<dbReference type="STRING" id="9685.ENSFCAP00000026088"/>
<dbReference type="ESTHER" id="felca-BCHE">
    <property type="family name" value="BCHE"/>
</dbReference>
<dbReference type="MEROPS" id="S09.980"/>
<dbReference type="GlyCosmos" id="O62760">
    <property type="glycosylation" value="9 sites, No reported glycans"/>
</dbReference>
<dbReference type="PaxDb" id="9685-ENSFCAP00000016618"/>
<dbReference type="Ensembl" id="ENSFCAT00000026436.4">
    <property type="protein sequence ID" value="ENSFCAP00000016618.1"/>
    <property type="gene ID" value="ENSFCAG00000030105.4"/>
</dbReference>
<dbReference type="GeneID" id="493960"/>
<dbReference type="KEGG" id="fca:493960"/>
<dbReference type="CTD" id="590"/>
<dbReference type="VGNC" id="VGNC:69221">
    <property type="gene designation" value="BCHE"/>
</dbReference>
<dbReference type="eggNOG" id="KOG4389">
    <property type="taxonomic scope" value="Eukaryota"/>
</dbReference>
<dbReference type="GeneTree" id="ENSGT00940000157023"/>
<dbReference type="HOGENOM" id="CLU_006586_13_0_1"/>
<dbReference type="InParanoid" id="O62760"/>
<dbReference type="OrthoDB" id="9000293at2759"/>
<dbReference type="Proteomes" id="UP000011712">
    <property type="component" value="Chromosome C2"/>
</dbReference>
<dbReference type="Bgee" id="ENSFCAG00000030105">
    <property type="expression patterns" value="Expressed in eyeball of camera-type eye and 10 other cell types or tissues"/>
</dbReference>
<dbReference type="GO" id="GO:0005615">
    <property type="term" value="C:extracellular space"/>
    <property type="evidence" value="ECO:0000318"/>
    <property type="project" value="GO_Central"/>
</dbReference>
<dbReference type="GO" id="GO:0005886">
    <property type="term" value="C:plasma membrane"/>
    <property type="evidence" value="ECO:0000318"/>
    <property type="project" value="GO_Central"/>
</dbReference>
<dbReference type="GO" id="GO:0003990">
    <property type="term" value="F:acetylcholinesterase activity"/>
    <property type="evidence" value="ECO:0000250"/>
    <property type="project" value="UniProtKB"/>
</dbReference>
<dbReference type="GO" id="GO:0004104">
    <property type="term" value="F:cholinesterase activity"/>
    <property type="evidence" value="ECO:0000250"/>
    <property type="project" value="UniProtKB"/>
</dbReference>
<dbReference type="GO" id="GO:0006581">
    <property type="term" value="P:acetylcholine catabolic process"/>
    <property type="evidence" value="ECO:0000318"/>
    <property type="project" value="GO_Central"/>
</dbReference>
<dbReference type="GO" id="GO:0019695">
    <property type="term" value="P:choline metabolic process"/>
    <property type="evidence" value="ECO:0000318"/>
    <property type="project" value="GO_Central"/>
</dbReference>
<dbReference type="CDD" id="cd00312">
    <property type="entry name" value="Esterase_lipase"/>
    <property type="match status" value="1"/>
</dbReference>
<dbReference type="FunFam" id="3.40.50.1820:FF:000029">
    <property type="entry name" value="Acetylcholinesterase"/>
    <property type="match status" value="1"/>
</dbReference>
<dbReference type="Gene3D" id="3.40.50.1820">
    <property type="entry name" value="alpha/beta hydrolase"/>
    <property type="match status" value="1"/>
</dbReference>
<dbReference type="InterPro" id="IPR029058">
    <property type="entry name" value="AB_hydrolase_fold"/>
</dbReference>
<dbReference type="InterPro" id="IPR050654">
    <property type="entry name" value="AChE-related_enzymes"/>
</dbReference>
<dbReference type="InterPro" id="IPR014788">
    <property type="entry name" value="AChE_tetra"/>
</dbReference>
<dbReference type="InterPro" id="IPR002018">
    <property type="entry name" value="CarbesteraseB"/>
</dbReference>
<dbReference type="InterPro" id="IPR019826">
    <property type="entry name" value="Carboxylesterase_B_AS"/>
</dbReference>
<dbReference type="InterPro" id="IPR019819">
    <property type="entry name" value="Carboxylesterase_B_CS"/>
</dbReference>
<dbReference type="InterPro" id="IPR000997">
    <property type="entry name" value="Cholinesterase"/>
</dbReference>
<dbReference type="PANTHER" id="PTHR43918">
    <property type="entry name" value="ACETYLCHOLINESTERASE"/>
    <property type="match status" value="1"/>
</dbReference>
<dbReference type="PANTHER" id="PTHR43918:SF5">
    <property type="entry name" value="CHOLINESTERASE"/>
    <property type="match status" value="1"/>
</dbReference>
<dbReference type="Pfam" id="PF08674">
    <property type="entry name" value="AChE_tetra"/>
    <property type="match status" value="1"/>
</dbReference>
<dbReference type="Pfam" id="PF00135">
    <property type="entry name" value="COesterase"/>
    <property type="match status" value="1"/>
</dbReference>
<dbReference type="PRINTS" id="PR00878">
    <property type="entry name" value="CHOLNESTRASE"/>
</dbReference>
<dbReference type="SUPFAM" id="SSF53474">
    <property type="entry name" value="alpha/beta-Hydrolases"/>
    <property type="match status" value="1"/>
</dbReference>
<dbReference type="PROSITE" id="PS00122">
    <property type="entry name" value="CARBOXYLESTERASE_B_1"/>
    <property type="match status" value="1"/>
</dbReference>
<dbReference type="PROSITE" id="PS00941">
    <property type="entry name" value="CARBOXYLESTERASE_B_2"/>
    <property type="match status" value="1"/>
</dbReference>
<keyword id="KW-1015">Disulfide bond</keyword>
<keyword id="KW-0325">Glycoprotein</keyword>
<keyword id="KW-0378">Hydrolase</keyword>
<keyword id="KW-0597">Phosphoprotein</keyword>
<keyword id="KW-1185">Reference proteome</keyword>
<keyword id="KW-0964">Secreted</keyword>
<keyword id="KW-0719">Serine esterase</keyword>
<keyword id="KW-0732">Signal</keyword>
<gene>
    <name type="primary">BCHE</name>
</gene>